<comment type="subunit">
    <text evidence="1">Component of the small ribosomal subunit. Mature ribosomes consist of a small (40S) and a large (60S) subunit. The 40S subunit contains about 33 different proteins and 1 molecule of RNA (18S). The 60S subunit contains about 49 different proteins and 3 molecules of RNA (25S, 5.8S and 5S).</text>
</comment>
<comment type="subcellular location">
    <subcellularLocation>
        <location evidence="1">Cytoplasm</location>
    </subcellularLocation>
</comment>
<comment type="similarity">
    <text evidence="1">Belongs to the eukaryotic ribosomal protein eS1 family.</text>
</comment>
<feature type="initiator methionine" description="Removed" evidence="1">
    <location>
        <position position="1"/>
    </location>
</feature>
<feature type="chain" id="PRO_0000389403" description="Small ribosomal subunit protein eS1">
    <location>
        <begin position="2"/>
        <end position="255"/>
    </location>
</feature>
<feature type="modified residue" description="N-acetylalanine; partial" evidence="1">
    <location>
        <position position="2"/>
    </location>
</feature>
<dbReference type="EMBL" id="DS231615">
    <property type="protein sequence ID" value="EDU40438.1"/>
    <property type="molecule type" value="Genomic_DNA"/>
</dbReference>
<dbReference type="RefSeq" id="XP_001931333.1">
    <property type="nucleotide sequence ID" value="XM_001931298.1"/>
</dbReference>
<dbReference type="SMR" id="B2VUE4"/>
<dbReference type="FunCoup" id="B2VUE4">
    <property type="interactions" value="1265"/>
</dbReference>
<dbReference type="STRING" id="426418.B2VUE4"/>
<dbReference type="EnsemblFungi" id="EDU40438">
    <property type="protein sequence ID" value="EDU40438"/>
    <property type="gene ID" value="PTRG_01000"/>
</dbReference>
<dbReference type="GeneID" id="6339471"/>
<dbReference type="KEGG" id="ptrr:6339471"/>
<dbReference type="eggNOG" id="KOG1628">
    <property type="taxonomic scope" value="Eukaryota"/>
</dbReference>
<dbReference type="HOGENOM" id="CLU_062507_0_0_1"/>
<dbReference type="InParanoid" id="B2VUE4"/>
<dbReference type="OMA" id="TRFKGHE"/>
<dbReference type="OrthoDB" id="20816at28556"/>
<dbReference type="Proteomes" id="UP000001471">
    <property type="component" value="Unassembled WGS sequence"/>
</dbReference>
<dbReference type="GO" id="GO:0022627">
    <property type="term" value="C:cytosolic small ribosomal subunit"/>
    <property type="evidence" value="ECO:0007669"/>
    <property type="project" value="UniProtKB-UniRule"/>
</dbReference>
<dbReference type="GO" id="GO:0003735">
    <property type="term" value="F:structural constituent of ribosome"/>
    <property type="evidence" value="ECO:0007669"/>
    <property type="project" value="UniProtKB-UniRule"/>
</dbReference>
<dbReference type="GO" id="GO:0006412">
    <property type="term" value="P:translation"/>
    <property type="evidence" value="ECO:0007669"/>
    <property type="project" value="UniProtKB-UniRule"/>
</dbReference>
<dbReference type="HAMAP" id="MF_03122">
    <property type="entry name" value="Ribosomal_eS1_euk"/>
    <property type="match status" value="1"/>
</dbReference>
<dbReference type="InterPro" id="IPR001593">
    <property type="entry name" value="Ribosomal_eS1"/>
</dbReference>
<dbReference type="InterPro" id="IPR018281">
    <property type="entry name" value="Ribosomal_eS1_CS"/>
</dbReference>
<dbReference type="InterPro" id="IPR027500">
    <property type="entry name" value="Ribosomal_eS1_euk"/>
</dbReference>
<dbReference type="PANTHER" id="PTHR11830">
    <property type="entry name" value="40S RIBOSOMAL PROTEIN S3A"/>
    <property type="match status" value="1"/>
</dbReference>
<dbReference type="Pfam" id="PF01015">
    <property type="entry name" value="Ribosomal_S3Ae"/>
    <property type="match status" value="1"/>
</dbReference>
<dbReference type="SMART" id="SM01397">
    <property type="entry name" value="Ribosomal_S3Ae"/>
    <property type="match status" value="1"/>
</dbReference>
<dbReference type="PROSITE" id="PS01191">
    <property type="entry name" value="RIBOSOMAL_S3AE"/>
    <property type="match status" value="1"/>
</dbReference>
<reference key="1">
    <citation type="journal article" date="2013" name="G3 (Bethesda)">
        <title>Comparative genomics of a plant-pathogenic fungus, Pyrenophora tritici-repentis, reveals transduplication and the impact of repeat elements on pathogenicity and population divergence.</title>
        <authorList>
            <person name="Manning V.A."/>
            <person name="Pandelova I."/>
            <person name="Dhillon B."/>
            <person name="Wilhelm L.J."/>
            <person name="Goodwin S.B."/>
            <person name="Berlin A.M."/>
            <person name="Figueroa M."/>
            <person name="Freitag M."/>
            <person name="Hane J.K."/>
            <person name="Henrissat B."/>
            <person name="Holman W.H."/>
            <person name="Kodira C.D."/>
            <person name="Martin J."/>
            <person name="Oliver R.P."/>
            <person name="Robbertse B."/>
            <person name="Schackwitz W."/>
            <person name="Schwartz D.C."/>
            <person name="Spatafora J.W."/>
            <person name="Turgeon B.G."/>
            <person name="Yandava C."/>
            <person name="Young S."/>
            <person name="Zhou S."/>
            <person name="Zeng Q."/>
            <person name="Grigoriev I.V."/>
            <person name="Ma L.-J."/>
            <person name="Ciuffetti L.M."/>
        </authorList>
    </citation>
    <scope>NUCLEOTIDE SEQUENCE [LARGE SCALE GENOMIC DNA]</scope>
    <source>
        <strain>Pt-1C-BFP</strain>
    </source>
</reference>
<proteinExistence type="inferred from homology"/>
<sequence>MAVGKNKRLSKGKKGLKKKTDTFAKKDWYNIKAPGTFAVRDVGKTLVNRTTGLKNANDALKGRIFEVSLADLQKDEDHAFRKVKLRVDEVQGKNCLTNFHGLDFTSDKLRSLVRKWQTLIEANVVVKTTDDYLLRLFCIAFTKRRPNQVKKTTYAQSSQIRAIRKKMVEIMARDASSCTLAQLTQKLIPEVIGREIEKATQGIYPLQNVHVRKVKLLKAPKFDLGALLGLHGESSQDDSGQKVEREFKETVLEQV</sequence>
<keyword id="KW-0007">Acetylation</keyword>
<keyword id="KW-0963">Cytoplasm</keyword>
<keyword id="KW-1185">Reference proteome</keyword>
<keyword id="KW-0687">Ribonucleoprotein</keyword>
<keyword id="KW-0689">Ribosomal protein</keyword>
<evidence type="ECO:0000255" key="1">
    <source>
        <dbReference type="HAMAP-Rule" id="MF_03122"/>
    </source>
</evidence>
<evidence type="ECO:0000305" key="2"/>
<gene>
    <name type="primary">rps1</name>
    <name type="ORF">PTRG_01000</name>
</gene>
<protein>
    <recommendedName>
        <fullName evidence="1">Small ribosomal subunit protein eS1</fullName>
    </recommendedName>
    <alternativeName>
        <fullName evidence="2">40S ribosomal protein S1</fullName>
    </alternativeName>
</protein>
<name>RS3A_PYRTR</name>
<accession>B2VUE4</accession>
<organism>
    <name type="scientific">Pyrenophora tritici-repentis (strain Pt-1C-BFP)</name>
    <name type="common">Wheat tan spot fungus</name>
    <name type="synonym">Drechslera tritici-repentis</name>
    <dbReference type="NCBI Taxonomy" id="426418"/>
    <lineage>
        <taxon>Eukaryota</taxon>
        <taxon>Fungi</taxon>
        <taxon>Dikarya</taxon>
        <taxon>Ascomycota</taxon>
        <taxon>Pezizomycotina</taxon>
        <taxon>Dothideomycetes</taxon>
        <taxon>Pleosporomycetidae</taxon>
        <taxon>Pleosporales</taxon>
        <taxon>Pleosporineae</taxon>
        <taxon>Pleosporaceae</taxon>
        <taxon>Pyrenophora</taxon>
    </lineage>
</organism>